<accession>P0DA25</accession>
<accession>P63771</accession>
<accession>Q99XS0</accession>
<comment type="function">
    <text evidence="1">Together with the chaperonin GroEL, plays an essential role in assisting protein folding. The GroEL-GroES system forms a nano-cage that allows encapsulation of the non-native substrate proteins and provides a physical environment optimized to promote and accelerate protein folding. GroES binds to the apical surface of the GroEL ring, thereby capping the opening of the GroEL channel.</text>
</comment>
<comment type="subunit">
    <text evidence="1">Heptamer of 7 subunits arranged in a ring. Interacts with the chaperonin GroEL.</text>
</comment>
<comment type="subcellular location">
    <subcellularLocation>
        <location evidence="1">Cytoplasm</location>
    </subcellularLocation>
</comment>
<comment type="similarity">
    <text evidence="1">Belongs to the GroES chaperonin family.</text>
</comment>
<protein>
    <recommendedName>
        <fullName evidence="1">Co-chaperonin GroES</fullName>
    </recommendedName>
    <alternativeName>
        <fullName evidence="1">10 kDa chaperonin</fullName>
    </alternativeName>
    <alternativeName>
        <fullName evidence="1">Chaperonin-10</fullName>
        <shortName evidence="1">Cpn10</shortName>
    </alternativeName>
</protein>
<feature type="chain" id="PRO_0000411300" description="Co-chaperonin GroES">
    <location>
        <begin position="1"/>
        <end position="96"/>
    </location>
</feature>
<sequence length="96" mass="10332">MLKPLGDRVVVRFDDEKEQTVGGFVLAGTHKESTRKATVLAVSETGVRTITGDSVLPSVSVGQEVLVENGHDLEVTVDDEKVSIIRESDIIAIVTK</sequence>
<dbReference type="EMBL" id="BA000034">
    <property type="protein sequence ID" value="BAC64858.1"/>
    <property type="molecule type" value="Genomic_DNA"/>
</dbReference>
<dbReference type="RefSeq" id="WP_002991292.1">
    <property type="nucleotide sequence ID" value="NC_004606.1"/>
</dbReference>
<dbReference type="SMR" id="P0DA25"/>
<dbReference type="GeneID" id="69901535"/>
<dbReference type="KEGG" id="sps:SPs1763"/>
<dbReference type="HOGENOM" id="CLU_132825_1_2_9"/>
<dbReference type="GO" id="GO:0005737">
    <property type="term" value="C:cytoplasm"/>
    <property type="evidence" value="ECO:0007669"/>
    <property type="project" value="UniProtKB-SubCell"/>
</dbReference>
<dbReference type="GO" id="GO:0005524">
    <property type="term" value="F:ATP binding"/>
    <property type="evidence" value="ECO:0007669"/>
    <property type="project" value="InterPro"/>
</dbReference>
<dbReference type="GO" id="GO:0046872">
    <property type="term" value="F:metal ion binding"/>
    <property type="evidence" value="ECO:0007669"/>
    <property type="project" value="TreeGrafter"/>
</dbReference>
<dbReference type="GO" id="GO:0044183">
    <property type="term" value="F:protein folding chaperone"/>
    <property type="evidence" value="ECO:0007669"/>
    <property type="project" value="InterPro"/>
</dbReference>
<dbReference type="GO" id="GO:0051087">
    <property type="term" value="F:protein-folding chaperone binding"/>
    <property type="evidence" value="ECO:0007669"/>
    <property type="project" value="TreeGrafter"/>
</dbReference>
<dbReference type="GO" id="GO:0051082">
    <property type="term" value="F:unfolded protein binding"/>
    <property type="evidence" value="ECO:0007669"/>
    <property type="project" value="TreeGrafter"/>
</dbReference>
<dbReference type="GO" id="GO:0051085">
    <property type="term" value="P:chaperone cofactor-dependent protein refolding"/>
    <property type="evidence" value="ECO:0007669"/>
    <property type="project" value="TreeGrafter"/>
</dbReference>
<dbReference type="CDD" id="cd00320">
    <property type="entry name" value="cpn10"/>
    <property type="match status" value="1"/>
</dbReference>
<dbReference type="FunFam" id="2.30.33.40:FF:000001">
    <property type="entry name" value="10 kDa chaperonin"/>
    <property type="match status" value="1"/>
</dbReference>
<dbReference type="Gene3D" id="2.30.33.40">
    <property type="entry name" value="GroES chaperonin"/>
    <property type="match status" value="1"/>
</dbReference>
<dbReference type="HAMAP" id="MF_00580">
    <property type="entry name" value="CH10"/>
    <property type="match status" value="1"/>
</dbReference>
<dbReference type="InterPro" id="IPR020818">
    <property type="entry name" value="Chaperonin_GroES"/>
</dbReference>
<dbReference type="InterPro" id="IPR037124">
    <property type="entry name" value="Chaperonin_GroES_sf"/>
</dbReference>
<dbReference type="InterPro" id="IPR018369">
    <property type="entry name" value="Chaprnonin_Cpn10_CS"/>
</dbReference>
<dbReference type="InterPro" id="IPR011032">
    <property type="entry name" value="GroES-like_sf"/>
</dbReference>
<dbReference type="NCBIfam" id="NF001528">
    <property type="entry name" value="PRK00364.1-4"/>
    <property type="match status" value="1"/>
</dbReference>
<dbReference type="PANTHER" id="PTHR10772">
    <property type="entry name" value="10 KDA HEAT SHOCK PROTEIN"/>
    <property type="match status" value="1"/>
</dbReference>
<dbReference type="PANTHER" id="PTHR10772:SF58">
    <property type="entry name" value="CO-CHAPERONIN GROES"/>
    <property type="match status" value="1"/>
</dbReference>
<dbReference type="Pfam" id="PF00166">
    <property type="entry name" value="Cpn10"/>
    <property type="match status" value="1"/>
</dbReference>
<dbReference type="PRINTS" id="PR00297">
    <property type="entry name" value="CHAPERONIN10"/>
</dbReference>
<dbReference type="SMART" id="SM00883">
    <property type="entry name" value="Cpn10"/>
    <property type="match status" value="1"/>
</dbReference>
<dbReference type="SUPFAM" id="SSF50129">
    <property type="entry name" value="GroES-like"/>
    <property type="match status" value="1"/>
</dbReference>
<dbReference type="PROSITE" id="PS00681">
    <property type="entry name" value="CHAPERONINS_CPN10"/>
    <property type="match status" value="1"/>
</dbReference>
<evidence type="ECO:0000255" key="1">
    <source>
        <dbReference type="HAMAP-Rule" id="MF_00580"/>
    </source>
</evidence>
<keyword id="KW-0143">Chaperone</keyword>
<keyword id="KW-0963">Cytoplasm</keyword>
<proteinExistence type="inferred from homology"/>
<organism>
    <name type="scientific">Streptococcus pyogenes serotype M3 (strain SSI-1)</name>
    <dbReference type="NCBI Taxonomy" id="193567"/>
    <lineage>
        <taxon>Bacteria</taxon>
        <taxon>Bacillati</taxon>
        <taxon>Bacillota</taxon>
        <taxon>Bacilli</taxon>
        <taxon>Lactobacillales</taxon>
        <taxon>Streptococcaceae</taxon>
        <taxon>Streptococcus</taxon>
    </lineage>
</organism>
<name>CH10_STRPQ</name>
<gene>
    <name evidence="1" type="primary">groES</name>
    <name evidence="1" type="synonym">groS</name>
    <name type="ordered locus">SPs1763</name>
</gene>
<reference key="1">
    <citation type="journal article" date="2003" name="Genome Res.">
        <title>Genome sequence of an M3 strain of Streptococcus pyogenes reveals a large-scale genomic rearrangement in invasive strains and new insights into phage evolution.</title>
        <authorList>
            <person name="Nakagawa I."/>
            <person name="Kurokawa K."/>
            <person name="Yamashita A."/>
            <person name="Nakata M."/>
            <person name="Tomiyasu Y."/>
            <person name="Okahashi N."/>
            <person name="Kawabata S."/>
            <person name="Yamazaki K."/>
            <person name="Shiba T."/>
            <person name="Yasunaga T."/>
            <person name="Hayashi H."/>
            <person name="Hattori M."/>
            <person name="Hamada S."/>
        </authorList>
    </citation>
    <scope>NUCLEOTIDE SEQUENCE [LARGE SCALE GENOMIC DNA]</scope>
    <source>
        <strain>SSI-1</strain>
    </source>
</reference>